<proteinExistence type="evidence at protein level"/>
<keyword id="KW-0001">2Fe-2S</keyword>
<keyword id="KW-0002">3D-structure</keyword>
<keyword id="KW-0150">Chloroplast</keyword>
<keyword id="KW-0903">Direct protein sequencing</keyword>
<keyword id="KW-0249">Electron transport</keyword>
<keyword id="KW-0408">Iron</keyword>
<keyword id="KW-0411">Iron-sulfur</keyword>
<keyword id="KW-0479">Metal-binding</keyword>
<keyword id="KW-0934">Plastid</keyword>
<keyword id="KW-1185">Reference proteome</keyword>
<keyword id="KW-0809">Transit peptide</keyword>
<keyword id="KW-0813">Transport</keyword>
<protein>
    <recommendedName>
        <fullName evidence="5">Ferredoxin-1, chloroplastic</fullName>
    </recommendedName>
    <alternativeName>
        <fullName evidence="4">Ferredoxin I</fullName>
        <shortName evidence="4">Fd I</shortName>
    </alternativeName>
</protein>
<name>FER1_MAIZE</name>
<gene>
    <name evidence="5" type="primary">FDX1</name>
    <name evidence="4" type="synonym">pFD1</name>
</gene>
<feature type="transit peptide" description="Chloroplast" evidence="2">
    <location>
        <begin position="1"/>
        <end position="52"/>
    </location>
</feature>
<feature type="chain" id="PRO_0000008830" description="Ferredoxin-1, chloroplastic">
    <location>
        <begin position="53"/>
        <end position="150"/>
    </location>
</feature>
<feature type="domain" description="2Fe-2S ferredoxin-type" evidence="1">
    <location>
        <begin position="55"/>
        <end position="145"/>
    </location>
</feature>
<feature type="binding site">
    <location>
        <position position="91"/>
    </location>
    <ligand>
        <name>[2Fe-2S] cluster</name>
        <dbReference type="ChEBI" id="CHEBI:190135"/>
    </ligand>
</feature>
<feature type="binding site">
    <location>
        <position position="96"/>
    </location>
    <ligand>
        <name>[2Fe-2S] cluster</name>
        <dbReference type="ChEBI" id="CHEBI:190135"/>
    </ligand>
</feature>
<feature type="binding site">
    <location>
        <position position="99"/>
    </location>
    <ligand>
        <name>[2Fe-2S] cluster</name>
        <dbReference type="ChEBI" id="CHEBI:190135"/>
    </ligand>
</feature>
<feature type="binding site">
    <location>
        <position position="129"/>
    </location>
    <ligand>
        <name>[2Fe-2S] cluster</name>
        <dbReference type="ChEBI" id="CHEBI:190135"/>
    </ligand>
</feature>
<feature type="mutagenesis site" description="Decreased affinity for Fd-NADP(+) oxidoreductase and decreased electron-transfer activity." evidence="3">
    <original>D</original>
    <variation>N</variation>
    <location>
        <position position="117"/>
    </location>
</feature>
<feature type="strand" evidence="7">
    <location>
        <begin position="54"/>
        <end position="61"/>
    </location>
</feature>
<feature type="strand" evidence="7">
    <location>
        <begin position="64"/>
        <end position="71"/>
    </location>
</feature>
<feature type="strand" evidence="6">
    <location>
        <begin position="72"/>
        <end position="74"/>
    </location>
</feature>
<feature type="helix" evidence="7">
    <location>
        <begin position="76"/>
        <end position="82"/>
    </location>
</feature>
<feature type="strand" evidence="7">
    <location>
        <begin position="90"/>
        <end position="94"/>
    </location>
</feature>
<feature type="strand" evidence="7">
    <location>
        <begin position="100"/>
        <end position="106"/>
    </location>
</feature>
<feature type="helix" evidence="7">
    <location>
        <begin position="118"/>
        <end position="122"/>
    </location>
</feature>
<feature type="strand" evidence="7">
    <location>
        <begin position="125"/>
        <end position="127"/>
    </location>
</feature>
<feature type="helix" evidence="7">
    <location>
        <begin position="128"/>
        <end position="130"/>
    </location>
</feature>
<feature type="strand" evidence="7">
    <location>
        <begin position="132"/>
        <end position="140"/>
    </location>
</feature>
<feature type="helix" evidence="7">
    <location>
        <begin position="144"/>
        <end position="147"/>
    </location>
</feature>
<reference key="1">
    <citation type="journal article" date="1991" name="Plant Physiol.">
        <title>Molecular cloning and differential expression of the maize ferredoxin gene family.</title>
        <authorList>
            <person name="Hase T."/>
            <person name="Kimatsa Y."/>
            <person name="Yonekura K."/>
            <person name="Matsumura T."/>
            <person name="Sakakibara H."/>
        </authorList>
    </citation>
    <scope>NUCLEOTIDE SEQUENCE [MRNA]</scope>
    <scope>PROTEIN SEQUENCE OF 53-76</scope>
</reference>
<reference key="2">
    <citation type="journal article" date="1999" name="Plant Physiol.">
        <title>Complementary DNA cloning and characterization of ferredoxin localized in bundle-sheath cells of maize leaves.</title>
        <authorList>
            <person name="Matsumura T."/>
            <person name="Kimata-Ariga Y."/>
            <person name="Sakakibara H."/>
            <person name="Sugiyama T."/>
            <person name="Murata H."/>
            <person name="Takao T."/>
            <person name="Shimonishi Y."/>
            <person name="Hase T."/>
        </authorList>
    </citation>
    <scope>FUNCTION</scope>
    <scope>IDENTIFICATION BY MASS SPECTROMETRY</scope>
    <scope>TISSUE SPECIFICITY</scope>
    <scope>BIOPHYSICOCHEMICAL PROPERTIES</scope>
    <scope>MUTAGENESIS OF ASP-117</scope>
    <scope>SUBCELLULAR LOCATION</scope>
    <source>
        <strain>cv. Golden cross Bantam T51</strain>
    </source>
</reference>
<reference key="3">
    <citation type="journal article" date="2001" name="Nat. Struct. Biol.">
        <title>Structure of the electron transfer complex between ferredoxin and ferredoxin-NADP+ reductase.</title>
        <authorList>
            <person name="Kurisu G."/>
            <person name="Kusunoki M."/>
            <person name="Katoh E."/>
            <person name="Yamazaki T."/>
            <person name="Teshima K."/>
            <person name="Onda Y."/>
            <person name="Kimata-Ariga Y."/>
            <person name="Hase T."/>
        </authorList>
    </citation>
    <scope>X-RAY CRYSTALLOGRAPHY (2.6 ANGSTROMS)</scope>
</reference>
<evidence type="ECO:0000255" key="1">
    <source>
        <dbReference type="PROSITE-ProRule" id="PRU00465"/>
    </source>
</evidence>
<evidence type="ECO:0000269" key="2">
    <source>
    </source>
</evidence>
<evidence type="ECO:0000269" key="3">
    <source>
    </source>
</evidence>
<evidence type="ECO:0000303" key="4">
    <source>
    </source>
</evidence>
<evidence type="ECO:0000305" key="5"/>
<evidence type="ECO:0007829" key="6">
    <source>
        <dbReference type="PDB" id="1GAQ"/>
    </source>
</evidence>
<evidence type="ECO:0007829" key="7">
    <source>
        <dbReference type="PDB" id="3B2F"/>
    </source>
</evidence>
<sequence length="150" mass="15838">MATVLGSPRAPAFFFSSSSLRAAPAPTAVALPAAKVGIMGRSASSRRRLRAQATYNVKLITPEGEVELQVPDDVYILDQAEEDGIDLPYSCRAGSCSSCAGKVVSGSVDQSDQSYLDDGQIADGWVLTCHAYPTSDVVIETHKEEELTGA</sequence>
<accession>P27787</accession>
<comment type="function">
    <text evidence="3">Ferredoxins are iron-sulfur proteins that transfer electrons in a wide variety of metabolic reactions. Occupies a key position both for transferring the photoreducing power to Fd-NADP(+) oxidoreductase (FNR), hence the formation of NADPH, and for mediating the cyclic electron flow around photosystem I (PSI).</text>
</comment>
<comment type="cofactor">
    <cofactor evidence="5">
        <name>[2Fe-2S] cluster</name>
        <dbReference type="ChEBI" id="CHEBI:190135"/>
    </cofactor>
    <text>Binds 1 [2Fe-2S] cluster.</text>
</comment>
<comment type="biophysicochemical properties">
    <redoxPotential>
        <text evidence="3">E(0) is -423 mV.</text>
    </redoxPotential>
</comment>
<comment type="subcellular location">
    <subcellularLocation>
        <location evidence="3">Plastid</location>
        <location evidence="3">Chloroplast</location>
    </subcellularLocation>
</comment>
<comment type="tissue specificity">
    <text evidence="3">Expressed almost exclusively in mesophyll cells.</text>
</comment>
<comment type="similarity">
    <text evidence="5">Belongs to the 2Fe2S plant-type ferredoxin family.</text>
</comment>
<dbReference type="EMBL" id="M73829">
    <property type="protein sequence ID" value="AAA33459.1"/>
    <property type="molecule type" value="mRNA"/>
</dbReference>
<dbReference type="EMBL" id="M73830">
    <property type="protein sequence ID" value="AAA33460.1"/>
    <property type="molecule type" value="mRNA"/>
</dbReference>
<dbReference type="PIR" id="T03286">
    <property type="entry name" value="T03286"/>
</dbReference>
<dbReference type="RefSeq" id="NP_001105345.1">
    <property type="nucleotide sequence ID" value="NM_001111875.1"/>
</dbReference>
<dbReference type="PDB" id="1GAQ">
    <property type="method" value="X-ray"/>
    <property type="resolution" value="2.59 A"/>
    <property type="chains" value="B=53-150"/>
</dbReference>
<dbReference type="PDB" id="3B2F">
    <property type="method" value="X-ray"/>
    <property type="resolution" value="1.70 A"/>
    <property type="chains" value="A/B=53-150"/>
</dbReference>
<dbReference type="PDB" id="3W5U">
    <property type="method" value="X-ray"/>
    <property type="resolution" value="2.70 A"/>
    <property type="chains" value="B/D/F/H=53-150"/>
</dbReference>
<dbReference type="PDB" id="3W5V">
    <property type="method" value="X-ray"/>
    <property type="resolution" value="3.81 A"/>
    <property type="chains" value="B/D=53-150"/>
</dbReference>
<dbReference type="PDB" id="5H8Y">
    <property type="method" value="X-ray"/>
    <property type="resolution" value="2.20 A"/>
    <property type="chains" value="E/F=53-150"/>
</dbReference>
<dbReference type="PDB" id="5H92">
    <property type="method" value="X-ray"/>
    <property type="resolution" value="2.08 A"/>
    <property type="chains" value="C=53-150"/>
</dbReference>
<dbReference type="PDBsum" id="1GAQ"/>
<dbReference type="PDBsum" id="3B2F"/>
<dbReference type="PDBsum" id="3W5U"/>
<dbReference type="PDBsum" id="3W5V"/>
<dbReference type="PDBsum" id="5H8Y"/>
<dbReference type="PDBsum" id="5H92"/>
<dbReference type="SMR" id="P27787"/>
<dbReference type="FunCoup" id="P27787">
    <property type="interactions" value="555"/>
</dbReference>
<dbReference type="IntAct" id="P27787">
    <property type="interactions" value="1"/>
</dbReference>
<dbReference type="STRING" id="4577.P27787"/>
<dbReference type="PaxDb" id="4577-GRMZM2G122337_P01"/>
<dbReference type="ProMEX" id="P27787"/>
<dbReference type="MaizeGDB" id="66392"/>
<dbReference type="eggNOG" id="ENOG502RXFZ">
    <property type="taxonomic scope" value="Eukaryota"/>
</dbReference>
<dbReference type="InParanoid" id="P27787"/>
<dbReference type="SABIO-RK" id="P27787"/>
<dbReference type="EvolutionaryTrace" id="P27787"/>
<dbReference type="Proteomes" id="UP000007305">
    <property type="component" value="Unplaced"/>
</dbReference>
<dbReference type="ExpressionAtlas" id="P27787">
    <property type="expression patterns" value="baseline and differential"/>
</dbReference>
<dbReference type="GO" id="GO:0009507">
    <property type="term" value="C:chloroplast"/>
    <property type="evidence" value="ECO:0000304"/>
    <property type="project" value="AgBase"/>
</dbReference>
<dbReference type="GO" id="GO:0009570">
    <property type="term" value="C:chloroplast stroma"/>
    <property type="evidence" value="ECO:0000314"/>
    <property type="project" value="AgBase"/>
</dbReference>
<dbReference type="GO" id="GO:0051537">
    <property type="term" value="F:2 iron, 2 sulfur cluster binding"/>
    <property type="evidence" value="ECO:0000314"/>
    <property type="project" value="AgBase"/>
</dbReference>
<dbReference type="GO" id="GO:0009055">
    <property type="term" value="F:electron transfer activity"/>
    <property type="evidence" value="ECO:0000314"/>
    <property type="project" value="AgBase"/>
</dbReference>
<dbReference type="GO" id="GO:0046872">
    <property type="term" value="F:metal ion binding"/>
    <property type="evidence" value="ECO:0007669"/>
    <property type="project" value="UniProtKB-KW"/>
</dbReference>
<dbReference type="GO" id="GO:0022900">
    <property type="term" value="P:electron transport chain"/>
    <property type="evidence" value="ECO:0000314"/>
    <property type="project" value="AgBase"/>
</dbReference>
<dbReference type="GO" id="GO:0009416">
    <property type="term" value="P:response to light stimulus"/>
    <property type="evidence" value="ECO:0000270"/>
    <property type="project" value="AgBase"/>
</dbReference>
<dbReference type="CDD" id="cd00207">
    <property type="entry name" value="fer2"/>
    <property type="match status" value="1"/>
</dbReference>
<dbReference type="FunFam" id="3.10.20.30:FF:000014">
    <property type="entry name" value="Ferredoxin"/>
    <property type="match status" value="1"/>
</dbReference>
<dbReference type="Gene3D" id="3.10.20.30">
    <property type="match status" value="1"/>
</dbReference>
<dbReference type="InterPro" id="IPR036010">
    <property type="entry name" value="2Fe-2S_ferredoxin-like_sf"/>
</dbReference>
<dbReference type="InterPro" id="IPR001041">
    <property type="entry name" value="2Fe-2S_ferredoxin-type"/>
</dbReference>
<dbReference type="InterPro" id="IPR006058">
    <property type="entry name" value="2Fe2S_fd_BS"/>
</dbReference>
<dbReference type="InterPro" id="IPR012675">
    <property type="entry name" value="Beta-grasp_dom_sf"/>
</dbReference>
<dbReference type="InterPro" id="IPR010241">
    <property type="entry name" value="Fd_pln"/>
</dbReference>
<dbReference type="NCBIfam" id="TIGR02008">
    <property type="entry name" value="fdx_plant"/>
    <property type="match status" value="1"/>
</dbReference>
<dbReference type="PANTHER" id="PTHR43112">
    <property type="entry name" value="FERREDOXIN"/>
    <property type="match status" value="1"/>
</dbReference>
<dbReference type="PANTHER" id="PTHR43112:SF3">
    <property type="entry name" value="FERREDOXIN-2, CHLOROPLASTIC"/>
    <property type="match status" value="1"/>
</dbReference>
<dbReference type="Pfam" id="PF00111">
    <property type="entry name" value="Fer2"/>
    <property type="match status" value="1"/>
</dbReference>
<dbReference type="SUPFAM" id="SSF54292">
    <property type="entry name" value="2Fe-2S ferredoxin-like"/>
    <property type="match status" value="1"/>
</dbReference>
<dbReference type="PROSITE" id="PS00197">
    <property type="entry name" value="2FE2S_FER_1"/>
    <property type="match status" value="1"/>
</dbReference>
<dbReference type="PROSITE" id="PS51085">
    <property type="entry name" value="2FE2S_FER_2"/>
    <property type="match status" value="1"/>
</dbReference>
<organism>
    <name type="scientific">Zea mays</name>
    <name type="common">Maize</name>
    <dbReference type="NCBI Taxonomy" id="4577"/>
    <lineage>
        <taxon>Eukaryota</taxon>
        <taxon>Viridiplantae</taxon>
        <taxon>Streptophyta</taxon>
        <taxon>Embryophyta</taxon>
        <taxon>Tracheophyta</taxon>
        <taxon>Spermatophyta</taxon>
        <taxon>Magnoliopsida</taxon>
        <taxon>Liliopsida</taxon>
        <taxon>Poales</taxon>
        <taxon>Poaceae</taxon>
        <taxon>PACMAD clade</taxon>
        <taxon>Panicoideae</taxon>
        <taxon>Andropogonodae</taxon>
        <taxon>Andropogoneae</taxon>
        <taxon>Tripsacinae</taxon>
        <taxon>Zea</taxon>
    </lineage>
</organism>